<organism>
    <name type="scientific">Arabidopsis thaliana</name>
    <name type="common">Mouse-ear cress</name>
    <dbReference type="NCBI Taxonomy" id="3702"/>
    <lineage>
        <taxon>Eukaryota</taxon>
        <taxon>Viridiplantae</taxon>
        <taxon>Streptophyta</taxon>
        <taxon>Embryophyta</taxon>
        <taxon>Tracheophyta</taxon>
        <taxon>Spermatophyta</taxon>
        <taxon>Magnoliopsida</taxon>
        <taxon>eudicotyledons</taxon>
        <taxon>Gunneridae</taxon>
        <taxon>Pentapetalae</taxon>
        <taxon>rosids</taxon>
        <taxon>malvids</taxon>
        <taxon>Brassicales</taxon>
        <taxon>Brassicaceae</taxon>
        <taxon>Camelineae</taxon>
        <taxon>Arabidopsis</taxon>
    </lineage>
</organism>
<dbReference type="EMBL" id="AP002044">
    <property type="protein sequence ID" value="BAB02249.1"/>
    <property type="molecule type" value="Genomic_DNA"/>
</dbReference>
<dbReference type="EMBL" id="CP002686">
    <property type="protein sequence ID" value="AEE75219.1"/>
    <property type="molecule type" value="Genomic_DNA"/>
</dbReference>
<dbReference type="EMBL" id="AY088815">
    <property type="protein sequence ID" value="AAM67259.1"/>
    <property type="molecule type" value="mRNA"/>
</dbReference>
<dbReference type="RefSeq" id="NP_001118617.1">
    <property type="nucleotide sequence ID" value="NM_001125145.2"/>
</dbReference>
<dbReference type="SMR" id="Q9LHK3"/>
<dbReference type="FunCoup" id="Q9LHK3">
    <property type="interactions" value="11"/>
</dbReference>
<dbReference type="STRING" id="3702.Q9LHK3"/>
<dbReference type="PaxDb" id="3702-AT3G12587.1"/>
<dbReference type="EnsemblPlants" id="AT3G12587.1">
    <property type="protein sequence ID" value="AT3G12587.1"/>
    <property type="gene ID" value="AT3G12587"/>
</dbReference>
<dbReference type="GeneID" id="6240849"/>
<dbReference type="Gramene" id="AT3G12587.1">
    <property type="protein sequence ID" value="AT3G12587.1"/>
    <property type="gene ID" value="AT3G12587"/>
</dbReference>
<dbReference type="KEGG" id="ath:AT3G12587"/>
<dbReference type="Araport" id="AT3G12587"/>
<dbReference type="TAIR" id="AT3G12587"/>
<dbReference type="eggNOG" id="ENOG502SDK8">
    <property type="taxonomic scope" value="Eukaryota"/>
</dbReference>
<dbReference type="HOGENOM" id="CLU_186352_1_1_1"/>
<dbReference type="InParanoid" id="Q9LHK3"/>
<dbReference type="OrthoDB" id="2124077at2759"/>
<dbReference type="PhylomeDB" id="Q9LHK3"/>
<dbReference type="PRO" id="PR:Q9LHK3"/>
<dbReference type="Proteomes" id="UP000006548">
    <property type="component" value="Chromosome 3"/>
</dbReference>
<dbReference type="ExpressionAtlas" id="Q9LHK3">
    <property type="expression patterns" value="baseline and differential"/>
</dbReference>
<dbReference type="GO" id="GO:0005789">
    <property type="term" value="C:endoplasmic reticulum membrane"/>
    <property type="evidence" value="ECO:0007669"/>
    <property type="project" value="UniProtKB-SubCell"/>
</dbReference>
<dbReference type="InterPro" id="IPR018943">
    <property type="entry name" value="Oligosaccaryltransferase"/>
</dbReference>
<dbReference type="InterPro" id="IPR044165">
    <property type="entry name" value="OST4_plant"/>
</dbReference>
<dbReference type="InterPro" id="IPR036330">
    <property type="entry name" value="Ost4p_sf"/>
</dbReference>
<dbReference type="PANTHER" id="PTHR28677:SF7">
    <property type="entry name" value="DOLICHYL-DIPHOSPHOOLIGOSACCHARIDE--PROTEIN GLYCOSYLTRANSFERASE SUBUNIT 4A"/>
    <property type="match status" value="1"/>
</dbReference>
<dbReference type="PANTHER" id="PTHR28677">
    <property type="entry name" value="DOLICHYL-DIPHOSPHOOLIGOSACCHARIDE--PROTEIN GLYCOSYLTRANSFERASE SUBUNIT 4A-RELATED"/>
    <property type="match status" value="1"/>
</dbReference>
<dbReference type="Pfam" id="PF10215">
    <property type="entry name" value="Ost4"/>
    <property type="match status" value="1"/>
</dbReference>
<dbReference type="SUPFAM" id="SSF103464">
    <property type="entry name" value="Oligosaccharyltransferase subunit ost4p"/>
    <property type="match status" value="1"/>
</dbReference>
<gene>
    <name type="primary">OST4A</name>
    <name type="ordered locus">At3g12587</name>
    <name type="ORF">MMF12.3</name>
</gene>
<proteinExistence type="inferred from homology"/>
<reference key="1">
    <citation type="journal article" date="2000" name="DNA Res.">
        <title>Structural analysis of Arabidopsis thaliana chromosome 3. II. Sequence features of the 4,251,695 bp regions covered by 90 P1, TAC and BAC clones.</title>
        <authorList>
            <person name="Kaneko T."/>
            <person name="Katoh T."/>
            <person name="Sato S."/>
            <person name="Nakamura Y."/>
            <person name="Asamizu E."/>
            <person name="Tabata S."/>
        </authorList>
    </citation>
    <scope>NUCLEOTIDE SEQUENCE [LARGE SCALE GENOMIC DNA]</scope>
    <source>
        <strain>cv. Columbia</strain>
    </source>
</reference>
<reference key="2">
    <citation type="journal article" date="2017" name="Plant J.">
        <title>Araport11: a complete reannotation of the Arabidopsis thaliana reference genome.</title>
        <authorList>
            <person name="Cheng C.Y."/>
            <person name="Krishnakumar V."/>
            <person name="Chan A.P."/>
            <person name="Thibaud-Nissen F."/>
            <person name="Schobel S."/>
            <person name="Town C.D."/>
        </authorList>
    </citation>
    <scope>GENOME REANNOTATION</scope>
    <source>
        <strain>cv. Columbia</strain>
    </source>
</reference>
<reference key="3">
    <citation type="submission" date="2002-03" db="EMBL/GenBank/DDBJ databases">
        <title>Full-length cDNA from Arabidopsis thaliana.</title>
        <authorList>
            <person name="Brover V.V."/>
            <person name="Troukhan M.E."/>
            <person name="Alexandrov N.A."/>
            <person name="Lu Y.-P."/>
            <person name="Flavell R.B."/>
            <person name="Feldmann K.A."/>
        </authorList>
    </citation>
    <scope>NUCLEOTIDE SEQUENCE [LARGE SCALE MRNA]</scope>
</reference>
<accession>Q9LHK3</accession>
<keyword id="KW-0256">Endoplasmic reticulum</keyword>
<keyword id="KW-0472">Membrane</keyword>
<keyword id="KW-1185">Reference proteome</keyword>
<keyword id="KW-0735">Signal-anchor</keyword>
<keyword id="KW-0812">Transmembrane</keyword>
<keyword id="KW-1133">Transmembrane helix</keyword>
<evidence type="ECO:0000250" key="1"/>
<evidence type="ECO:0000250" key="2">
    <source>
        <dbReference type="UniProtKB" id="Q99380"/>
    </source>
</evidence>
<evidence type="ECO:0000255" key="3"/>
<evidence type="ECO:0000305" key="4"/>
<name>OST4A_ARATH</name>
<protein>
    <recommendedName>
        <fullName>Dolichyl-diphosphooligosaccharide--protein glycosyltransferase subunit 4A</fullName>
    </recommendedName>
</protein>
<sequence length="37" mass="4197">MIDDQDLGFIANFLGIFIFALVIAYHYVTADPKYEAT</sequence>
<feature type="chain" id="PRO_0000420818" description="Dolichyl-diphosphooligosaccharide--protein glycosyltransferase subunit 4A">
    <location>
        <begin position="1"/>
        <end position="37"/>
    </location>
</feature>
<feature type="topological domain" description="Lumenal" evidence="3">
    <location>
        <begin position="1"/>
        <end position="7"/>
    </location>
</feature>
<feature type="transmembrane region" description="Helical" evidence="3">
    <location>
        <begin position="8"/>
        <end position="28"/>
    </location>
</feature>
<feature type="topological domain" description="Cytoplasmic" evidence="3">
    <location>
        <begin position="29"/>
        <end position="37"/>
    </location>
</feature>
<comment type="function">
    <text evidence="2">Subunit of the oligosaccharyl transferase (OST) complex that catalyzes the initial transfer of a defined glycan (Glc(3)Man(9)GlcNAc(2) in eukaryotes) from the lipid carrier dolichol-pyrophosphate to an asparagine residue within an Asn-X-Ser/Thr consensus motif in nascent polypeptide chains, the first step in protein N-glycosylation. N-glycosylation occurs cotranslationally and the complex associates with the Sec61 complex at the channel-forming translocon complex that mediates protein translocation across the endoplasmic reticulum (ER). All subunits are required for a maximal enzyme activity.</text>
</comment>
<comment type="subunit">
    <text evidence="2">Component of the oligosaccharyltransferase (OST) complex.</text>
</comment>
<comment type="subcellular location">
    <subcellularLocation>
        <location evidence="1">Endoplasmic reticulum membrane</location>
        <topology evidence="1">Single-pass type III membrane protein</topology>
    </subcellularLocation>
</comment>
<comment type="similarity">
    <text evidence="4">Belongs to the OST4 family.</text>
</comment>